<feature type="chain" id="PRO_0000127066" description="Origin recognition complex subunit 1">
    <location>
        <begin position="1"/>
        <end position="850"/>
    </location>
</feature>
<feature type="domain" description="BAH" evidence="4">
    <location>
        <begin position="45"/>
        <end position="171"/>
    </location>
</feature>
<feature type="region of interest" description="Disordered" evidence="5">
    <location>
        <begin position="209"/>
        <end position="286"/>
    </location>
</feature>
<feature type="region of interest" description="Disordered" evidence="5">
    <location>
        <begin position="349"/>
        <end position="376"/>
    </location>
</feature>
<feature type="region of interest" description="Disordered" evidence="5">
    <location>
        <begin position="393"/>
        <end position="469"/>
    </location>
</feature>
<feature type="compositionally biased region" description="Low complexity" evidence="5">
    <location>
        <begin position="214"/>
        <end position="224"/>
    </location>
</feature>
<feature type="compositionally biased region" description="Basic and acidic residues" evidence="5">
    <location>
        <begin position="234"/>
        <end position="245"/>
    </location>
</feature>
<feature type="compositionally biased region" description="Basic and acidic residues" evidence="5">
    <location>
        <begin position="353"/>
        <end position="368"/>
    </location>
</feature>
<feature type="compositionally biased region" description="Acidic residues" evidence="5">
    <location>
        <begin position="395"/>
        <end position="404"/>
    </location>
</feature>
<feature type="binding site" evidence="2">
    <location>
        <position position="489"/>
    </location>
    <ligand>
        <name>ATP</name>
        <dbReference type="ChEBI" id="CHEBI:30616"/>
    </ligand>
</feature>
<feature type="binding site" evidence="2">
    <location>
        <begin position="523"/>
        <end position="531"/>
    </location>
    <ligand>
        <name>ATP</name>
        <dbReference type="ChEBI" id="CHEBI:30616"/>
    </ligand>
</feature>
<feature type="binding site" evidence="2">
    <location>
        <position position="609"/>
    </location>
    <ligand>
        <name>Mg(2+)</name>
        <dbReference type="ChEBI" id="CHEBI:18420"/>
    </ligand>
</feature>
<feature type="binding site" evidence="2">
    <location>
        <position position="610"/>
    </location>
    <ligand>
        <name>ATP</name>
        <dbReference type="ChEBI" id="CHEBI:30616"/>
    </ligand>
</feature>
<feature type="binding site" evidence="2">
    <location>
        <position position="610"/>
    </location>
    <ligand>
        <name>Mg(2+)</name>
        <dbReference type="ChEBI" id="CHEBI:18420"/>
    </ligand>
</feature>
<feature type="binding site" evidence="2">
    <location>
        <position position="643"/>
    </location>
    <ligand>
        <name>ATP</name>
        <dbReference type="ChEBI" id="CHEBI:30616"/>
    </ligand>
</feature>
<feature type="binding site" evidence="2">
    <location>
        <position position="709"/>
    </location>
    <ligand>
        <name>ATP</name>
        <dbReference type="ChEBI" id="CHEBI:30616"/>
    </ligand>
</feature>
<feature type="site" description="Histone H4K20me2 binding" evidence="3">
    <location>
        <position position="94"/>
    </location>
</feature>
<feature type="modified residue" description="Phosphoserine" evidence="3">
    <location>
        <position position="259"/>
    </location>
</feature>
<feature type="modified residue" description="Phosphoserine" evidence="2">
    <location>
        <position position="277"/>
    </location>
</feature>
<feature type="modified residue" description="Phosphoserine" evidence="2">
    <location>
        <position position="291"/>
    </location>
</feature>
<feature type="modified residue" description="Phosphoserine" evidence="2">
    <location>
        <position position="411"/>
    </location>
</feature>
<sequence>MPSYLTRQKTRKIFSWVGRPLPDRKHNHQIYKEMRMKVNDCSTEIHIKVGQFVLIKGNNNAKPYVAKLIELFEDGSKFHSKKCARVQWCVRFSEIPISKRHLLGRKPAAQEIFWYDDPDCGNNICVETIIGPVQVVALAPDEVIPMDQKSEDTLFVKLSWNTKNFEPLSPEVLAALKKLEDSPKCQKPLEGKSKNVKNPSWNATEQMVKRIESSHSTSKSCQTSAHPVSPNARKPLELSDSDIPRKPNMRLSQKILCDSLDSQKNSKRKTAFSETASPPKRCQPGEIKNLSPLKTLEKNGQAHSFCDKGSMILRAQDPSFITTKISMERALDPVRSRLRPSVMLTSILTPKRTGREAGKQEAHTEPTRTSHRVHRRSSLLTLNRIRQQLWLLDDDKSDQEEEESISSAEVSDSTSEEEDDSIPSLLKRNSQPQSRNRRMASKPSLQTPSKTPKKTTHHPTPQIRGRNIAVQEPTSVLEEARLMLHVSAVPDSLPCREQEFQDIYSFVESKLLDGTGGCMYISGVPGTGKTATVNEVIRCLQQAAQTNDVPPFEYVDVNGMKLTEPHQVYVQILQKLTGQKATANHAAQLLAKRFCSQGSQQETTVLLVDELDLLWTSKQDVMYNLFDWPTHKGARLIVLAIANTMDLPERIMMNRVSSRLGLTRMSFQPYSHNQLKEILVSRLKHLKAFEDDAIQLVARKVAALSGDARRCLDICRRATEICELSHNHGNSLGPVTVSHLMEAIDEMFSSSYITAIKNCSLLEQGFLRAIIAEFRRSGLEEATFQQIYSQHVALCRMEGLPYPTMSETMAVCSNLGSCRLLLVEPSRNDLLLRVRLNVSQDDVLYALKEE</sequence>
<dbReference type="EMBL" id="AF254572">
    <property type="protein sequence ID" value="AAF66067.1"/>
    <property type="molecule type" value="mRNA"/>
</dbReference>
<dbReference type="RefSeq" id="NP_001233617.1">
    <property type="nucleotide sequence ID" value="NM_001246688.1"/>
</dbReference>
<dbReference type="SMR" id="Q9JI69"/>
<dbReference type="PaxDb" id="10029-NP_001233617.1"/>
<dbReference type="GeneID" id="100689425"/>
<dbReference type="KEGG" id="cge:100689425"/>
<dbReference type="CTD" id="4998"/>
<dbReference type="eggNOG" id="KOG1514">
    <property type="taxonomic scope" value="Eukaryota"/>
</dbReference>
<dbReference type="OrthoDB" id="1926878at2759"/>
<dbReference type="Proteomes" id="UP000694386">
    <property type="component" value="Unplaced"/>
</dbReference>
<dbReference type="Proteomes" id="UP001108280">
    <property type="component" value="Chromosome 2"/>
</dbReference>
<dbReference type="GO" id="GO:0005664">
    <property type="term" value="C:nuclear origin of replication recognition complex"/>
    <property type="evidence" value="ECO:0000250"/>
    <property type="project" value="UniProtKB"/>
</dbReference>
<dbReference type="GO" id="GO:0005524">
    <property type="term" value="F:ATP binding"/>
    <property type="evidence" value="ECO:0007669"/>
    <property type="project" value="UniProtKB-KW"/>
</dbReference>
<dbReference type="GO" id="GO:0016887">
    <property type="term" value="F:ATP hydrolysis activity"/>
    <property type="evidence" value="ECO:0007669"/>
    <property type="project" value="InterPro"/>
</dbReference>
<dbReference type="GO" id="GO:0003682">
    <property type="term" value="F:chromatin binding"/>
    <property type="evidence" value="ECO:0007669"/>
    <property type="project" value="InterPro"/>
</dbReference>
<dbReference type="GO" id="GO:0003688">
    <property type="term" value="F:DNA replication origin binding"/>
    <property type="evidence" value="ECO:0007669"/>
    <property type="project" value="TreeGrafter"/>
</dbReference>
<dbReference type="GO" id="GO:0046872">
    <property type="term" value="F:metal ion binding"/>
    <property type="evidence" value="ECO:0007669"/>
    <property type="project" value="UniProtKB-KW"/>
</dbReference>
<dbReference type="GO" id="GO:0006270">
    <property type="term" value="P:DNA replication initiation"/>
    <property type="evidence" value="ECO:0007669"/>
    <property type="project" value="TreeGrafter"/>
</dbReference>
<dbReference type="GO" id="GO:0033314">
    <property type="term" value="P:mitotic DNA replication checkpoint signaling"/>
    <property type="evidence" value="ECO:0007669"/>
    <property type="project" value="TreeGrafter"/>
</dbReference>
<dbReference type="CDD" id="cd08768">
    <property type="entry name" value="Cdc6_C"/>
    <property type="match status" value="1"/>
</dbReference>
<dbReference type="FunFam" id="1.10.8.60:FF:000062">
    <property type="entry name" value="Origin recognition complex subunit 1"/>
    <property type="match status" value="1"/>
</dbReference>
<dbReference type="FunFam" id="2.30.30.490:FF:000010">
    <property type="entry name" value="Origin recognition complex subunit 1"/>
    <property type="match status" value="1"/>
</dbReference>
<dbReference type="FunFam" id="3.40.50.300:FF:000199">
    <property type="entry name" value="Origin recognition complex subunit 1"/>
    <property type="match status" value="1"/>
</dbReference>
<dbReference type="Gene3D" id="2.30.30.490">
    <property type="match status" value="1"/>
</dbReference>
<dbReference type="Gene3D" id="3.40.50.300">
    <property type="entry name" value="P-loop containing nucleotide triphosphate hydrolases"/>
    <property type="match status" value="1"/>
</dbReference>
<dbReference type="InterPro" id="IPR003593">
    <property type="entry name" value="AAA+_ATPase"/>
</dbReference>
<dbReference type="InterPro" id="IPR003959">
    <property type="entry name" value="ATPase_AAA_core"/>
</dbReference>
<dbReference type="InterPro" id="IPR001025">
    <property type="entry name" value="BAH_dom"/>
</dbReference>
<dbReference type="InterPro" id="IPR043151">
    <property type="entry name" value="BAH_sf"/>
</dbReference>
<dbReference type="InterPro" id="IPR015163">
    <property type="entry name" value="Cdc6_C"/>
</dbReference>
<dbReference type="InterPro" id="IPR054425">
    <property type="entry name" value="Cdc6_ORC1-like_ATPase_lid"/>
</dbReference>
<dbReference type="InterPro" id="IPR050311">
    <property type="entry name" value="ORC1/CDC6"/>
</dbReference>
<dbReference type="InterPro" id="IPR027417">
    <property type="entry name" value="P-loop_NTPase"/>
</dbReference>
<dbReference type="PANTHER" id="PTHR10763">
    <property type="entry name" value="CELL DIVISION CONTROL PROTEIN 6-RELATED"/>
    <property type="match status" value="1"/>
</dbReference>
<dbReference type="PANTHER" id="PTHR10763:SF23">
    <property type="entry name" value="ORIGIN RECOGNITION COMPLEX SUBUNIT 1"/>
    <property type="match status" value="1"/>
</dbReference>
<dbReference type="Pfam" id="PF00004">
    <property type="entry name" value="AAA"/>
    <property type="match status" value="1"/>
</dbReference>
<dbReference type="Pfam" id="PF01426">
    <property type="entry name" value="BAH"/>
    <property type="match status" value="1"/>
</dbReference>
<dbReference type="Pfam" id="PF22606">
    <property type="entry name" value="Cdc6-ORC-like_ATPase_lid"/>
    <property type="match status" value="1"/>
</dbReference>
<dbReference type="Pfam" id="PF09079">
    <property type="entry name" value="Cdc6_C"/>
    <property type="match status" value="1"/>
</dbReference>
<dbReference type="SMART" id="SM00382">
    <property type="entry name" value="AAA"/>
    <property type="match status" value="1"/>
</dbReference>
<dbReference type="SMART" id="SM00439">
    <property type="entry name" value="BAH"/>
    <property type="match status" value="1"/>
</dbReference>
<dbReference type="SMART" id="SM01074">
    <property type="entry name" value="Cdc6_C"/>
    <property type="match status" value="1"/>
</dbReference>
<dbReference type="SUPFAM" id="SSF52540">
    <property type="entry name" value="P-loop containing nucleoside triphosphate hydrolases"/>
    <property type="match status" value="1"/>
</dbReference>
<dbReference type="PROSITE" id="PS51038">
    <property type="entry name" value="BAH"/>
    <property type="match status" value="1"/>
</dbReference>
<organism>
    <name type="scientific">Cricetulus griseus</name>
    <name type="common">Chinese hamster</name>
    <name type="synonym">Cricetulus barabensis griseus</name>
    <dbReference type="NCBI Taxonomy" id="10029"/>
    <lineage>
        <taxon>Eukaryota</taxon>
        <taxon>Metazoa</taxon>
        <taxon>Chordata</taxon>
        <taxon>Craniata</taxon>
        <taxon>Vertebrata</taxon>
        <taxon>Euteleostomi</taxon>
        <taxon>Mammalia</taxon>
        <taxon>Eutheria</taxon>
        <taxon>Euarchontoglires</taxon>
        <taxon>Glires</taxon>
        <taxon>Rodentia</taxon>
        <taxon>Myomorpha</taxon>
        <taxon>Muroidea</taxon>
        <taxon>Cricetidae</taxon>
        <taxon>Cricetinae</taxon>
        <taxon>Cricetulus</taxon>
    </lineage>
</organism>
<proteinExistence type="evidence at transcript level"/>
<reference key="1">
    <citation type="journal article" date="2000" name="EMBO J.">
        <title>Selective instability of Orc1 protein accounts for the absence of functional origin recognition complexes during the M-G1 transition in mammals.</title>
        <authorList>
            <person name="Natale D.A."/>
            <person name="Li C.-J."/>
            <person name="Sun W.-H."/>
            <person name="DePamphilis M.L."/>
        </authorList>
    </citation>
    <scope>NUCLEOTIDE SEQUENCE [MRNA]</scope>
</reference>
<accession>Q9JI69</accession>
<name>ORC1_CRIGR</name>
<comment type="function">
    <text evidence="1">Component of the origin recognition complex (ORC) that binds origins of replication. DNA-binding is ATP-dependent. The specific DNA sequences that define origins of replication have not been identified yet. ORC is required to assemble the pre-replication complex necessary to initiate DNA replication (By similarity).</text>
</comment>
<comment type="subunit">
    <text evidence="1">Component of ORC, a complex composed of at least 6 subunits: ORC1, ORC2, ORC3, ORC4, ORC5 and ORC6. ORC is regulated in a cell-cycle dependent manner. It is sequentially assembled at the exit from anaphase of mitosis and disassembled as cells enter S phase (By similarity). Interacts with CDC6 and KAT7/HBO1 (By similarity). Interacts with LRWD1 predominantly during the G1 phase and with less affinity during mitosis, when phosphorylated (By similarity).</text>
</comment>
<comment type="subcellular location">
    <subcellularLocation>
        <location>Nucleus</location>
    </subcellularLocation>
</comment>
<comment type="domain">
    <text evidence="1">The BAH domain mediates binding to dimethylated histone H4 'Lys-20' (H4K20me2), which is enriched at replication origins.</text>
</comment>
<comment type="PTM">
    <text evidence="1">Phosphorylated during mitosis.</text>
</comment>
<comment type="similarity">
    <text evidence="6">Belongs to the ORC1 family.</text>
</comment>
<evidence type="ECO:0000250" key="1"/>
<evidence type="ECO:0000250" key="2">
    <source>
        <dbReference type="UniProtKB" id="Q13415"/>
    </source>
</evidence>
<evidence type="ECO:0000250" key="3">
    <source>
        <dbReference type="UniProtKB" id="Q9Z1N2"/>
    </source>
</evidence>
<evidence type="ECO:0000255" key="4">
    <source>
        <dbReference type="PROSITE-ProRule" id="PRU00370"/>
    </source>
</evidence>
<evidence type="ECO:0000256" key="5">
    <source>
        <dbReference type="SAM" id="MobiDB-lite"/>
    </source>
</evidence>
<evidence type="ECO:0000305" key="6"/>
<gene>
    <name type="primary">ORC1</name>
    <name type="synonym">ORC1L</name>
</gene>
<keyword id="KW-0067">ATP-binding</keyword>
<keyword id="KW-0235">DNA replication</keyword>
<keyword id="KW-0238">DNA-binding</keyword>
<keyword id="KW-0460">Magnesium</keyword>
<keyword id="KW-0479">Metal-binding</keyword>
<keyword id="KW-0547">Nucleotide-binding</keyword>
<keyword id="KW-0539">Nucleus</keyword>
<keyword id="KW-0597">Phosphoprotein</keyword>
<protein>
    <recommendedName>
        <fullName>Origin recognition complex subunit 1</fullName>
    </recommendedName>
</protein>